<accession>A4XPQ2</accession>
<evidence type="ECO:0000255" key="1">
    <source>
        <dbReference type="HAMAP-Rule" id="MF_00110"/>
    </source>
</evidence>
<dbReference type="EC" id="4.2.3.4" evidence="1"/>
<dbReference type="EMBL" id="CP000680">
    <property type="protein sequence ID" value="ABP83318.1"/>
    <property type="molecule type" value="Genomic_DNA"/>
</dbReference>
<dbReference type="SMR" id="A4XPQ2"/>
<dbReference type="STRING" id="399739.Pmen_0548"/>
<dbReference type="KEGG" id="pmy:Pmen_0548"/>
<dbReference type="PATRIC" id="fig|399739.8.peg.556"/>
<dbReference type="eggNOG" id="COG0337">
    <property type="taxonomic scope" value="Bacteria"/>
</dbReference>
<dbReference type="HOGENOM" id="CLU_001201_0_2_6"/>
<dbReference type="OrthoDB" id="9806583at2"/>
<dbReference type="UniPathway" id="UPA00053">
    <property type="reaction ID" value="UER00085"/>
</dbReference>
<dbReference type="GO" id="GO:0005737">
    <property type="term" value="C:cytoplasm"/>
    <property type="evidence" value="ECO:0007669"/>
    <property type="project" value="UniProtKB-SubCell"/>
</dbReference>
<dbReference type="GO" id="GO:0003856">
    <property type="term" value="F:3-dehydroquinate synthase activity"/>
    <property type="evidence" value="ECO:0007669"/>
    <property type="project" value="UniProtKB-UniRule"/>
</dbReference>
<dbReference type="GO" id="GO:0046872">
    <property type="term" value="F:metal ion binding"/>
    <property type="evidence" value="ECO:0007669"/>
    <property type="project" value="UniProtKB-KW"/>
</dbReference>
<dbReference type="GO" id="GO:0000166">
    <property type="term" value="F:nucleotide binding"/>
    <property type="evidence" value="ECO:0007669"/>
    <property type="project" value="UniProtKB-KW"/>
</dbReference>
<dbReference type="GO" id="GO:0008652">
    <property type="term" value="P:amino acid biosynthetic process"/>
    <property type="evidence" value="ECO:0007669"/>
    <property type="project" value="UniProtKB-KW"/>
</dbReference>
<dbReference type="GO" id="GO:0009073">
    <property type="term" value="P:aromatic amino acid family biosynthetic process"/>
    <property type="evidence" value="ECO:0007669"/>
    <property type="project" value="UniProtKB-KW"/>
</dbReference>
<dbReference type="GO" id="GO:0009423">
    <property type="term" value="P:chorismate biosynthetic process"/>
    <property type="evidence" value="ECO:0007669"/>
    <property type="project" value="UniProtKB-UniRule"/>
</dbReference>
<dbReference type="CDD" id="cd08195">
    <property type="entry name" value="DHQS"/>
    <property type="match status" value="1"/>
</dbReference>
<dbReference type="FunFam" id="1.20.1090.10:FF:000002">
    <property type="entry name" value="3-dehydroquinate synthase"/>
    <property type="match status" value="1"/>
</dbReference>
<dbReference type="FunFam" id="3.40.50.1970:FF:000001">
    <property type="entry name" value="3-dehydroquinate synthase"/>
    <property type="match status" value="1"/>
</dbReference>
<dbReference type="Gene3D" id="3.40.50.1970">
    <property type="match status" value="1"/>
</dbReference>
<dbReference type="Gene3D" id="1.20.1090.10">
    <property type="entry name" value="Dehydroquinate synthase-like - alpha domain"/>
    <property type="match status" value="1"/>
</dbReference>
<dbReference type="HAMAP" id="MF_00110">
    <property type="entry name" value="DHQ_synthase"/>
    <property type="match status" value="1"/>
</dbReference>
<dbReference type="InterPro" id="IPR050071">
    <property type="entry name" value="Dehydroquinate_synthase"/>
</dbReference>
<dbReference type="InterPro" id="IPR016037">
    <property type="entry name" value="DHQ_synth_AroB"/>
</dbReference>
<dbReference type="InterPro" id="IPR030963">
    <property type="entry name" value="DHQ_synth_fam"/>
</dbReference>
<dbReference type="InterPro" id="IPR030960">
    <property type="entry name" value="DHQS/DOIS_N"/>
</dbReference>
<dbReference type="InterPro" id="IPR056179">
    <property type="entry name" value="DHQS_C"/>
</dbReference>
<dbReference type="NCBIfam" id="TIGR01357">
    <property type="entry name" value="aroB"/>
    <property type="match status" value="1"/>
</dbReference>
<dbReference type="PANTHER" id="PTHR43622">
    <property type="entry name" value="3-DEHYDROQUINATE SYNTHASE"/>
    <property type="match status" value="1"/>
</dbReference>
<dbReference type="PANTHER" id="PTHR43622:SF7">
    <property type="entry name" value="3-DEHYDROQUINATE SYNTHASE, CHLOROPLASTIC"/>
    <property type="match status" value="1"/>
</dbReference>
<dbReference type="Pfam" id="PF01761">
    <property type="entry name" value="DHQ_synthase"/>
    <property type="match status" value="1"/>
</dbReference>
<dbReference type="Pfam" id="PF24621">
    <property type="entry name" value="DHQS_C"/>
    <property type="match status" value="1"/>
</dbReference>
<dbReference type="PIRSF" id="PIRSF001455">
    <property type="entry name" value="DHQ_synth"/>
    <property type="match status" value="1"/>
</dbReference>
<dbReference type="SUPFAM" id="SSF56796">
    <property type="entry name" value="Dehydroquinate synthase-like"/>
    <property type="match status" value="1"/>
</dbReference>
<protein>
    <recommendedName>
        <fullName evidence="1">3-dehydroquinate synthase</fullName>
        <shortName evidence="1">DHQS</shortName>
        <ecNumber evidence="1">4.2.3.4</ecNumber>
    </recommendedName>
</protein>
<sequence length="367" mass="39615">MQTLHVELGERSYPIYIGSGLLSRPELLSRHVAGRQVAVVTNETVAPLYLQTLLKSLEGFNVATVVLPDGEAFKNWETLQLIFDGLLTARHDRRTTVVALGGGVIGDMAGFAAACYQRGVDFIQVPTTLLSQVDSSVGGKTGINHPLGKNMVGAFYQPKAVLIDTASLDTLPARELSAGLAEVIKYGLICDEPFLGWLEANMAALRSLDQDALTYAIERSCAAKAQVVGADERESGVRATLNLGHTFGHAIETEQGYGVWLHGEAVAAGTVMALEMSHRLGWISVAERDRGVRLLQAAGLPIVPPRDMTPAQFLEHMAVDKKVLDGQLRLVLLKRLGEAVVTADYPREILDATLRSDYVALAQSFNS</sequence>
<comment type="function">
    <text evidence="1">Catalyzes the conversion of 3-deoxy-D-arabino-heptulosonate 7-phosphate (DAHP) to dehydroquinate (DHQ).</text>
</comment>
<comment type="catalytic activity">
    <reaction evidence="1">
        <text>7-phospho-2-dehydro-3-deoxy-D-arabino-heptonate = 3-dehydroquinate + phosphate</text>
        <dbReference type="Rhea" id="RHEA:21968"/>
        <dbReference type="ChEBI" id="CHEBI:32364"/>
        <dbReference type="ChEBI" id="CHEBI:43474"/>
        <dbReference type="ChEBI" id="CHEBI:58394"/>
        <dbReference type="EC" id="4.2.3.4"/>
    </reaction>
</comment>
<comment type="cofactor">
    <cofactor evidence="1">
        <name>Co(2+)</name>
        <dbReference type="ChEBI" id="CHEBI:48828"/>
    </cofactor>
    <cofactor evidence="1">
        <name>Zn(2+)</name>
        <dbReference type="ChEBI" id="CHEBI:29105"/>
    </cofactor>
    <text evidence="1">Binds 1 divalent metal cation per subunit. Can use either Co(2+) or Zn(2+).</text>
</comment>
<comment type="cofactor">
    <cofactor evidence="1">
        <name>NAD(+)</name>
        <dbReference type="ChEBI" id="CHEBI:57540"/>
    </cofactor>
</comment>
<comment type="pathway">
    <text evidence="1">Metabolic intermediate biosynthesis; chorismate biosynthesis; chorismate from D-erythrose 4-phosphate and phosphoenolpyruvate: step 2/7.</text>
</comment>
<comment type="subcellular location">
    <subcellularLocation>
        <location evidence="1">Cytoplasm</location>
    </subcellularLocation>
</comment>
<comment type="similarity">
    <text evidence="1">Belongs to the sugar phosphate cyclases superfamily. Dehydroquinate synthase family.</text>
</comment>
<gene>
    <name evidence="1" type="primary">aroB</name>
    <name type="ordered locus">Pmen_0548</name>
</gene>
<reference key="1">
    <citation type="submission" date="2007-04" db="EMBL/GenBank/DDBJ databases">
        <title>Complete sequence of Pseudomonas mendocina ymp.</title>
        <authorList>
            <consortium name="US DOE Joint Genome Institute"/>
            <person name="Copeland A."/>
            <person name="Lucas S."/>
            <person name="Lapidus A."/>
            <person name="Barry K."/>
            <person name="Glavina del Rio T."/>
            <person name="Dalin E."/>
            <person name="Tice H."/>
            <person name="Pitluck S."/>
            <person name="Kiss H."/>
            <person name="Brettin T."/>
            <person name="Detter J.C."/>
            <person name="Bruce D."/>
            <person name="Han C."/>
            <person name="Schmutz J."/>
            <person name="Larimer F."/>
            <person name="Land M."/>
            <person name="Hauser L."/>
            <person name="Kyrpides N."/>
            <person name="Mikhailova N."/>
            <person name="Hersman L."/>
            <person name="Dubois J."/>
            <person name="Maurice P."/>
            <person name="Richardson P."/>
        </authorList>
    </citation>
    <scope>NUCLEOTIDE SEQUENCE [LARGE SCALE GENOMIC DNA]</scope>
    <source>
        <strain>ymp</strain>
    </source>
</reference>
<organism>
    <name type="scientific">Ectopseudomonas mendocina (strain ymp)</name>
    <name type="common">Pseudomonas mendocina</name>
    <dbReference type="NCBI Taxonomy" id="399739"/>
    <lineage>
        <taxon>Bacteria</taxon>
        <taxon>Pseudomonadati</taxon>
        <taxon>Pseudomonadota</taxon>
        <taxon>Gammaproteobacteria</taxon>
        <taxon>Pseudomonadales</taxon>
        <taxon>Pseudomonadaceae</taxon>
        <taxon>Ectopseudomonas</taxon>
    </lineage>
</organism>
<feature type="chain" id="PRO_1000094572" description="3-dehydroquinate synthase">
    <location>
        <begin position="1"/>
        <end position="367"/>
    </location>
</feature>
<feature type="binding site" evidence="1">
    <location>
        <begin position="69"/>
        <end position="74"/>
    </location>
    <ligand>
        <name>NAD(+)</name>
        <dbReference type="ChEBI" id="CHEBI:57540"/>
    </ligand>
</feature>
<feature type="binding site" evidence="1">
    <location>
        <begin position="103"/>
        <end position="107"/>
    </location>
    <ligand>
        <name>NAD(+)</name>
        <dbReference type="ChEBI" id="CHEBI:57540"/>
    </ligand>
</feature>
<feature type="binding site" evidence="1">
    <location>
        <begin position="127"/>
        <end position="128"/>
    </location>
    <ligand>
        <name>NAD(+)</name>
        <dbReference type="ChEBI" id="CHEBI:57540"/>
    </ligand>
</feature>
<feature type="binding site" evidence="1">
    <location>
        <position position="140"/>
    </location>
    <ligand>
        <name>NAD(+)</name>
        <dbReference type="ChEBI" id="CHEBI:57540"/>
    </ligand>
</feature>
<feature type="binding site" evidence="1">
    <location>
        <position position="149"/>
    </location>
    <ligand>
        <name>NAD(+)</name>
        <dbReference type="ChEBI" id="CHEBI:57540"/>
    </ligand>
</feature>
<feature type="binding site" evidence="1">
    <location>
        <position position="182"/>
    </location>
    <ligand>
        <name>Zn(2+)</name>
        <dbReference type="ChEBI" id="CHEBI:29105"/>
    </ligand>
</feature>
<feature type="binding site" evidence="1">
    <location>
        <position position="245"/>
    </location>
    <ligand>
        <name>Zn(2+)</name>
        <dbReference type="ChEBI" id="CHEBI:29105"/>
    </ligand>
</feature>
<feature type="binding site" evidence="1">
    <location>
        <position position="262"/>
    </location>
    <ligand>
        <name>Zn(2+)</name>
        <dbReference type="ChEBI" id="CHEBI:29105"/>
    </ligand>
</feature>
<proteinExistence type="inferred from homology"/>
<keyword id="KW-0028">Amino-acid biosynthesis</keyword>
<keyword id="KW-0057">Aromatic amino acid biosynthesis</keyword>
<keyword id="KW-0170">Cobalt</keyword>
<keyword id="KW-0963">Cytoplasm</keyword>
<keyword id="KW-0456">Lyase</keyword>
<keyword id="KW-0479">Metal-binding</keyword>
<keyword id="KW-0520">NAD</keyword>
<keyword id="KW-0547">Nucleotide-binding</keyword>
<keyword id="KW-0862">Zinc</keyword>
<name>AROB_ECTM1</name>